<accession>Q932K6</accession>
<gene>
    <name type="ordered locus">SAV0210</name>
</gene>
<reference key="1">
    <citation type="journal article" date="2001" name="Lancet">
        <title>Whole genome sequencing of meticillin-resistant Staphylococcus aureus.</title>
        <authorList>
            <person name="Kuroda M."/>
            <person name="Ohta T."/>
            <person name="Uchiyama I."/>
            <person name="Baba T."/>
            <person name="Yuzawa H."/>
            <person name="Kobayashi I."/>
            <person name="Cui L."/>
            <person name="Oguchi A."/>
            <person name="Aoki K."/>
            <person name="Nagai Y."/>
            <person name="Lian J.-Q."/>
            <person name="Ito T."/>
            <person name="Kanamori M."/>
            <person name="Matsumaru H."/>
            <person name="Maruyama A."/>
            <person name="Murakami H."/>
            <person name="Hosoyama A."/>
            <person name="Mizutani-Ui Y."/>
            <person name="Takahashi N.K."/>
            <person name="Sawano T."/>
            <person name="Inoue R."/>
            <person name="Kaito C."/>
            <person name="Sekimizu K."/>
            <person name="Hirakawa H."/>
            <person name="Kuhara S."/>
            <person name="Goto S."/>
            <person name="Yabuzaki J."/>
            <person name="Kanehisa M."/>
            <person name="Yamashita A."/>
            <person name="Oshima K."/>
            <person name="Furuya K."/>
            <person name="Yoshino C."/>
            <person name="Shiba T."/>
            <person name="Hattori M."/>
            <person name="Ogasawara N."/>
            <person name="Hayashi H."/>
            <person name="Hiramatsu K."/>
        </authorList>
    </citation>
    <scope>NUCLEOTIDE SEQUENCE [LARGE SCALE GENOMIC DNA]</scope>
    <source>
        <strain>Mu50 / ATCC 700699</strain>
    </source>
</reference>
<protein>
    <recommendedName>
        <fullName>Uncharacterized protein SAV0210</fullName>
    </recommendedName>
</protein>
<organism>
    <name type="scientific">Staphylococcus aureus (strain Mu50 / ATCC 700699)</name>
    <dbReference type="NCBI Taxonomy" id="158878"/>
    <lineage>
        <taxon>Bacteria</taxon>
        <taxon>Bacillati</taxon>
        <taxon>Bacillota</taxon>
        <taxon>Bacilli</taxon>
        <taxon>Bacillales</taxon>
        <taxon>Staphylococcaceae</taxon>
        <taxon>Staphylococcus</taxon>
    </lineage>
</organism>
<evidence type="ECO:0000255" key="1"/>
<evidence type="ECO:0000305" key="2"/>
<sequence>MKTHKIFWLNLAAIIIISIVVSGGMFLAMKWEQIHLKDGLKKVLSTYPIKNLETLYEIDGHDNPHYENNDQDTWYIESSYSVVGSDELLKEDRMLLKVDKNTHKITGEYDTTTNDRKDATDSTYKSYPVKVVNNKIVFTKDVKDPALKQKIENNQFLIQSGDLTSILNSNDLKVTHDPTTDYYNLSGKLSNDNPNVKQLKRRYNIPSNASTKVELKGMSDLKGNNHQDQKLYFYFSSPGKNQIIYKESLTYNKLSEH</sequence>
<name>Y210_STAAM</name>
<feature type="chain" id="PRO_0000282118" description="Uncharacterized protein SAV0210">
    <location>
        <begin position="1"/>
        <end position="257"/>
    </location>
</feature>
<feature type="transmembrane region" description="Helical" evidence="1">
    <location>
        <begin position="6"/>
        <end position="26"/>
    </location>
</feature>
<dbReference type="EMBL" id="BA000017">
    <property type="protein sequence ID" value="BAB56372.1"/>
    <property type="molecule type" value="Genomic_DNA"/>
</dbReference>
<dbReference type="RefSeq" id="WP_000848128.1">
    <property type="nucleotide sequence ID" value="NC_002758.2"/>
</dbReference>
<dbReference type="SMR" id="Q932K6"/>
<dbReference type="KEGG" id="sav:SAV0210"/>
<dbReference type="HOGENOM" id="CLU_071589_0_1_9"/>
<dbReference type="PhylomeDB" id="Q932K6"/>
<dbReference type="Proteomes" id="UP000002481">
    <property type="component" value="Chromosome"/>
</dbReference>
<dbReference type="GO" id="GO:0005886">
    <property type="term" value="C:plasma membrane"/>
    <property type="evidence" value="ECO:0007669"/>
    <property type="project" value="UniProtKB-SubCell"/>
</dbReference>
<dbReference type="Gene3D" id="2.50.20.40">
    <property type="match status" value="1"/>
</dbReference>
<dbReference type="InterPro" id="IPR007595">
    <property type="entry name" value="Csa"/>
</dbReference>
<dbReference type="InterPro" id="IPR038641">
    <property type="entry name" value="Csa_sf"/>
</dbReference>
<dbReference type="NCBIfam" id="TIGR01742">
    <property type="entry name" value="SA_tandem_lipo"/>
    <property type="match status" value="1"/>
</dbReference>
<dbReference type="Pfam" id="PF04507">
    <property type="entry name" value="DUF576"/>
    <property type="match status" value="1"/>
</dbReference>
<comment type="subcellular location">
    <subcellularLocation>
        <location evidence="2">Cell membrane</location>
        <topology evidence="2">Single-pass membrane protein</topology>
    </subcellularLocation>
</comment>
<comment type="similarity">
    <text evidence="2">Belongs to the staphylococcal tandem lipoprotein family.</text>
</comment>
<proteinExistence type="inferred from homology"/>
<keyword id="KW-1003">Cell membrane</keyword>
<keyword id="KW-0472">Membrane</keyword>
<keyword id="KW-0812">Transmembrane</keyword>
<keyword id="KW-1133">Transmembrane helix</keyword>